<dbReference type="EMBL" id="D30763">
    <property type="protein sequence ID" value="BAA06436.1"/>
    <property type="molecule type" value="mRNA"/>
</dbReference>
<dbReference type="EMBL" id="AY072818">
    <property type="protein sequence ID" value="AAL77198.1"/>
    <property type="molecule type" value="mRNA"/>
</dbReference>
<dbReference type="EMBL" id="AP003909">
    <property type="protein sequence ID" value="BAD08924.1"/>
    <property type="molecule type" value="Genomic_DNA"/>
</dbReference>
<dbReference type="EMBL" id="AP008214">
    <property type="protein sequence ID" value="BAF22693.1"/>
    <property type="molecule type" value="Genomic_DNA"/>
</dbReference>
<dbReference type="EMBL" id="AP014964">
    <property type="protein sequence ID" value="BAT03433.1"/>
    <property type="molecule type" value="Genomic_DNA"/>
</dbReference>
<dbReference type="EMBL" id="CM000145">
    <property type="protein sequence ID" value="EAZ41237.1"/>
    <property type="molecule type" value="Genomic_DNA"/>
</dbReference>
<dbReference type="EMBL" id="AK119206">
    <property type="protein sequence ID" value="BAG99579.1"/>
    <property type="molecule type" value="mRNA"/>
</dbReference>
<dbReference type="EMBL" id="AK119709">
    <property type="protein sequence ID" value="BAG99760.1"/>
    <property type="molecule type" value="mRNA"/>
</dbReference>
<dbReference type="EMBL" id="AK120393">
    <property type="protein sequence ID" value="BAG99993.1"/>
    <property type="molecule type" value="mRNA"/>
</dbReference>
<dbReference type="RefSeq" id="XP_015650415.1">
    <property type="nucleotide sequence ID" value="XM_015794929.1"/>
</dbReference>
<dbReference type="SMR" id="Q0J8M2"/>
<dbReference type="BioGRID" id="813476">
    <property type="interactions" value="1"/>
</dbReference>
<dbReference type="FunCoup" id="Q0J8M2">
    <property type="interactions" value="411"/>
</dbReference>
<dbReference type="STRING" id="39947.Q0J8M2"/>
<dbReference type="PaxDb" id="39947-Q0J8M2"/>
<dbReference type="EnsemblPlants" id="Os08t0104600-02">
    <property type="protein sequence ID" value="Os08t0104600-02"/>
    <property type="gene ID" value="Os08g0104600"/>
</dbReference>
<dbReference type="Gramene" id="Os08t0104600-02">
    <property type="protein sequence ID" value="Os08t0104600-02"/>
    <property type="gene ID" value="Os08g0104600"/>
</dbReference>
<dbReference type="KEGG" id="dosa:Os08g0104600"/>
<dbReference type="eggNOG" id="ENOG502RXFZ">
    <property type="taxonomic scope" value="Eukaryota"/>
</dbReference>
<dbReference type="HOGENOM" id="CLU_082632_1_1_1"/>
<dbReference type="InParanoid" id="Q0J8M2"/>
<dbReference type="OMA" id="CEQNIEL"/>
<dbReference type="OrthoDB" id="1885901at2759"/>
<dbReference type="Proteomes" id="UP000000763">
    <property type="component" value="Chromosome 8"/>
</dbReference>
<dbReference type="Proteomes" id="UP000007752">
    <property type="component" value="Chromosome 8"/>
</dbReference>
<dbReference type="Proteomes" id="UP000059680">
    <property type="component" value="Chromosome 8"/>
</dbReference>
<dbReference type="ExpressionAtlas" id="Q0J8M2">
    <property type="expression patterns" value="baseline and differential"/>
</dbReference>
<dbReference type="GO" id="GO:0009570">
    <property type="term" value="C:chloroplast stroma"/>
    <property type="evidence" value="ECO:0000318"/>
    <property type="project" value="GO_Central"/>
</dbReference>
<dbReference type="GO" id="GO:0051537">
    <property type="term" value="F:2 iron, 2 sulfur cluster binding"/>
    <property type="evidence" value="ECO:0007669"/>
    <property type="project" value="UniProtKB-KW"/>
</dbReference>
<dbReference type="GO" id="GO:0009055">
    <property type="term" value="F:electron transfer activity"/>
    <property type="evidence" value="ECO:0007669"/>
    <property type="project" value="InterPro"/>
</dbReference>
<dbReference type="GO" id="GO:0046872">
    <property type="term" value="F:metal ion binding"/>
    <property type="evidence" value="ECO:0007669"/>
    <property type="project" value="UniProtKB-KW"/>
</dbReference>
<dbReference type="GO" id="GO:0022900">
    <property type="term" value="P:electron transport chain"/>
    <property type="evidence" value="ECO:0007669"/>
    <property type="project" value="InterPro"/>
</dbReference>
<dbReference type="CDD" id="cd00207">
    <property type="entry name" value="fer2"/>
    <property type="match status" value="1"/>
</dbReference>
<dbReference type="FunFam" id="3.10.20.30:FF:000014">
    <property type="entry name" value="Ferredoxin"/>
    <property type="match status" value="1"/>
</dbReference>
<dbReference type="Gene3D" id="3.10.20.30">
    <property type="match status" value="1"/>
</dbReference>
<dbReference type="InterPro" id="IPR036010">
    <property type="entry name" value="2Fe-2S_ferredoxin-like_sf"/>
</dbReference>
<dbReference type="InterPro" id="IPR001041">
    <property type="entry name" value="2Fe-2S_ferredoxin-type"/>
</dbReference>
<dbReference type="InterPro" id="IPR006058">
    <property type="entry name" value="2Fe2S_fd_BS"/>
</dbReference>
<dbReference type="InterPro" id="IPR012675">
    <property type="entry name" value="Beta-grasp_dom_sf"/>
</dbReference>
<dbReference type="InterPro" id="IPR010241">
    <property type="entry name" value="Fd_pln"/>
</dbReference>
<dbReference type="NCBIfam" id="TIGR02008">
    <property type="entry name" value="fdx_plant"/>
    <property type="match status" value="1"/>
</dbReference>
<dbReference type="PANTHER" id="PTHR43112">
    <property type="entry name" value="FERREDOXIN"/>
    <property type="match status" value="1"/>
</dbReference>
<dbReference type="PANTHER" id="PTHR43112:SF3">
    <property type="entry name" value="FERREDOXIN-2, CHLOROPLASTIC"/>
    <property type="match status" value="1"/>
</dbReference>
<dbReference type="Pfam" id="PF00111">
    <property type="entry name" value="Fer2"/>
    <property type="match status" value="1"/>
</dbReference>
<dbReference type="SUPFAM" id="SSF54292">
    <property type="entry name" value="2Fe-2S ferredoxin-like"/>
    <property type="match status" value="1"/>
</dbReference>
<dbReference type="PROSITE" id="PS00197">
    <property type="entry name" value="2FE2S_FER_1"/>
    <property type="match status" value="1"/>
</dbReference>
<dbReference type="PROSITE" id="PS51085">
    <property type="entry name" value="2FE2S_FER_2"/>
    <property type="match status" value="1"/>
</dbReference>
<comment type="function">
    <text>Ferredoxins are iron-sulfur proteins that transfer electrons in a wide variety of metabolic reactions.</text>
</comment>
<comment type="cofactor">
    <cofactor>
        <name>[2Fe-2S] cluster</name>
        <dbReference type="ChEBI" id="CHEBI:190135"/>
    </cofactor>
    <text>Binds 1 [2Fe-2S] cluster.</text>
</comment>
<comment type="subcellular location">
    <subcellularLocation>
        <location>Plastid</location>
        <location>Chloroplast</location>
    </subcellularLocation>
</comment>
<comment type="similarity">
    <text evidence="3">Belongs to the 2Fe2S plant-type ferredoxin family.</text>
</comment>
<proteinExistence type="evidence at protein level"/>
<feature type="transit peptide" description="Chloroplast" evidence="2">
    <location>
        <begin position="1"/>
        <end position="43"/>
    </location>
</feature>
<feature type="chain" id="PRO_0000008835" description="Ferredoxin-1, chloroplastic">
    <location>
        <begin position="44"/>
        <end position="139"/>
    </location>
</feature>
<feature type="domain" description="2Fe-2S ferredoxin-type" evidence="1">
    <location>
        <begin position="46"/>
        <end position="136"/>
    </location>
</feature>
<feature type="binding site">
    <location>
        <position position="82"/>
    </location>
    <ligand>
        <name>[2Fe-2S] cluster</name>
        <dbReference type="ChEBI" id="CHEBI:190135"/>
    </ligand>
</feature>
<feature type="binding site">
    <location>
        <position position="87"/>
    </location>
    <ligand>
        <name>[2Fe-2S] cluster</name>
        <dbReference type="ChEBI" id="CHEBI:190135"/>
    </ligand>
</feature>
<feature type="binding site">
    <location>
        <position position="90"/>
    </location>
    <ligand>
        <name>[2Fe-2S] cluster</name>
        <dbReference type="ChEBI" id="CHEBI:190135"/>
    </ligand>
</feature>
<feature type="binding site">
    <location>
        <position position="120"/>
    </location>
    <ligand>
        <name>[2Fe-2S] cluster</name>
        <dbReference type="ChEBI" id="CHEBI:190135"/>
    </ligand>
</feature>
<feature type="sequence conflict" description="In Ref. 2; AAL77198." evidence="3" ref="2">
    <location>
        <position position="28"/>
    </location>
</feature>
<name>FER1_ORYSJ</name>
<gene>
    <name type="primary">ADI1</name>
    <name type="ordered locus">Os08g0104600</name>
    <name type="ordered locus">LOC_Os08g01380</name>
    <name type="ORF">OJ1300_E01.1</name>
    <name type="ORF">OsJ_024720</name>
</gene>
<keyword id="KW-0001">2Fe-2S</keyword>
<keyword id="KW-0150">Chloroplast</keyword>
<keyword id="KW-0903">Direct protein sequencing</keyword>
<keyword id="KW-0249">Electron transport</keyword>
<keyword id="KW-0408">Iron</keyword>
<keyword id="KW-0411">Iron-sulfur</keyword>
<keyword id="KW-0479">Metal-binding</keyword>
<keyword id="KW-0934">Plastid</keyword>
<keyword id="KW-1185">Reference proteome</keyword>
<keyword id="KW-0809">Transit peptide</keyword>
<keyword id="KW-0813">Transport</keyword>
<reference key="1">
    <citation type="online journal article" date="1996" name="Plant Gene Register">
        <title>Molecular cloning of a rice leaf ferredoxin cDNA.</title>
        <authorList>
            <person name="Ohmori K."/>
            <person name="Doyama N."/>
            <person name="Ida S."/>
        </authorList>
        <locator>PGR96-025</locator>
    </citation>
    <scope>NUCLEOTIDE SEQUENCE [MRNA]</scope>
    <source>
        <strain>cv. Kinmaze</strain>
        <tissue>Leaf</tissue>
    </source>
</reference>
<reference key="2">
    <citation type="submission" date="2002-01" db="EMBL/GenBank/DDBJ databases">
        <authorList>
            <person name="Rihe P."/>
            <person name="Quanhong Y."/>
            <person name="Aisheng X."/>
            <person name="Xian L."/>
            <person name="Huiqin F."/>
        </authorList>
    </citation>
    <scope>NUCLEOTIDE SEQUENCE [MRNA]</scope>
</reference>
<reference key="3">
    <citation type="journal article" date="2005" name="Nature">
        <title>The map-based sequence of the rice genome.</title>
        <authorList>
            <consortium name="International rice genome sequencing project (IRGSP)"/>
        </authorList>
    </citation>
    <scope>NUCLEOTIDE SEQUENCE [LARGE SCALE GENOMIC DNA]</scope>
    <source>
        <strain>cv. Nipponbare</strain>
    </source>
</reference>
<reference key="4">
    <citation type="journal article" date="2008" name="Nucleic Acids Res.">
        <title>The rice annotation project database (RAP-DB): 2008 update.</title>
        <authorList>
            <consortium name="The rice annotation project (RAP)"/>
        </authorList>
    </citation>
    <scope>GENOME REANNOTATION</scope>
    <source>
        <strain>cv. Nipponbare</strain>
    </source>
</reference>
<reference key="5">
    <citation type="journal article" date="2013" name="Rice">
        <title>Improvement of the Oryza sativa Nipponbare reference genome using next generation sequence and optical map data.</title>
        <authorList>
            <person name="Kawahara Y."/>
            <person name="de la Bastide M."/>
            <person name="Hamilton J.P."/>
            <person name="Kanamori H."/>
            <person name="McCombie W.R."/>
            <person name="Ouyang S."/>
            <person name="Schwartz D.C."/>
            <person name="Tanaka T."/>
            <person name="Wu J."/>
            <person name="Zhou S."/>
            <person name="Childs K.L."/>
            <person name="Davidson R.M."/>
            <person name="Lin H."/>
            <person name="Quesada-Ocampo L."/>
            <person name="Vaillancourt B."/>
            <person name="Sakai H."/>
            <person name="Lee S.S."/>
            <person name="Kim J."/>
            <person name="Numa H."/>
            <person name="Itoh T."/>
            <person name="Buell C.R."/>
            <person name="Matsumoto T."/>
        </authorList>
    </citation>
    <scope>GENOME REANNOTATION</scope>
    <source>
        <strain>cv. Nipponbare</strain>
    </source>
</reference>
<reference key="6">
    <citation type="journal article" date="2005" name="PLoS Biol.">
        <title>The genomes of Oryza sativa: a history of duplications.</title>
        <authorList>
            <person name="Yu J."/>
            <person name="Wang J."/>
            <person name="Lin W."/>
            <person name="Li S."/>
            <person name="Li H."/>
            <person name="Zhou J."/>
            <person name="Ni P."/>
            <person name="Dong W."/>
            <person name="Hu S."/>
            <person name="Zeng C."/>
            <person name="Zhang J."/>
            <person name="Zhang Y."/>
            <person name="Li R."/>
            <person name="Xu Z."/>
            <person name="Li S."/>
            <person name="Li X."/>
            <person name="Zheng H."/>
            <person name="Cong L."/>
            <person name="Lin L."/>
            <person name="Yin J."/>
            <person name="Geng J."/>
            <person name="Li G."/>
            <person name="Shi J."/>
            <person name="Liu J."/>
            <person name="Lv H."/>
            <person name="Li J."/>
            <person name="Wang J."/>
            <person name="Deng Y."/>
            <person name="Ran L."/>
            <person name="Shi X."/>
            <person name="Wang X."/>
            <person name="Wu Q."/>
            <person name="Li C."/>
            <person name="Ren X."/>
            <person name="Wang J."/>
            <person name="Wang X."/>
            <person name="Li D."/>
            <person name="Liu D."/>
            <person name="Zhang X."/>
            <person name="Ji Z."/>
            <person name="Zhao W."/>
            <person name="Sun Y."/>
            <person name="Zhang Z."/>
            <person name="Bao J."/>
            <person name="Han Y."/>
            <person name="Dong L."/>
            <person name="Ji J."/>
            <person name="Chen P."/>
            <person name="Wu S."/>
            <person name="Liu J."/>
            <person name="Xiao Y."/>
            <person name="Bu D."/>
            <person name="Tan J."/>
            <person name="Yang L."/>
            <person name="Ye C."/>
            <person name="Zhang J."/>
            <person name="Xu J."/>
            <person name="Zhou Y."/>
            <person name="Yu Y."/>
            <person name="Zhang B."/>
            <person name="Zhuang S."/>
            <person name="Wei H."/>
            <person name="Liu B."/>
            <person name="Lei M."/>
            <person name="Yu H."/>
            <person name="Li Y."/>
            <person name="Xu H."/>
            <person name="Wei S."/>
            <person name="He X."/>
            <person name="Fang L."/>
            <person name="Zhang Z."/>
            <person name="Zhang Y."/>
            <person name="Huang X."/>
            <person name="Su Z."/>
            <person name="Tong W."/>
            <person name="Li J."/>
            <person name="Tong Z."/>
            <person name="Li S."/>
            <person name="Ye J."/>
            <person name="Wang L."/>
            <person name="Fang L."/>
            <person name="Lei T."/>
            <person name="Chen C.-S."/>
            <person name="Chen H.-C."/>
            <person name="Xu Z."/>
            <person name="Li H."/>
            <person name="Huang H."/>
            <person name="Zhang F."/>
            <person name="Xu H."/>
            <person name="Li N."/>
            <person name="Zhao C."/>
            <person name="Li S."/>
            <person name="Dong L."/>
            <person name="Huang Y."/>
            <person name="Li L."/>
            <person name="Xi Y."/>
            <person name="Qi Q."/>
            <person name="Li W."/>
            <person name="Zhang B."/>
            <person name="Hu W."/>
            <person name="Zhang Y."/>
            <person name="Tian X."/>
            <person name="Jiao Y."/>
            <person name="Liang X."/>
            <person name="Jin J."/>
            <person name="Gao L."/>
            <person name="Zheng W."/>
            <person name="Hao B."/>
            <person name="Liu S.-M."/>
            <person name="Wang W."/>
            <person name="Yuan L."/>
            <person name="Cao M."/>
            <person name="McDermott J."/>
            <person name="Samudrala R."/>
            <person name="Wang J."/>
            <person name="Wong G.K.-S."/>
            <person name="Yang H."/>
        </authorList>
    </citation>
    <scope>NUCLEOTIDE SEQUENCE [LARGE SCALE GENOMIC DNA]</scope>
    <source>
        <strain>cv. Nipponbare</strain>
    </source>
</reference>
<reference key="7">
    <citation type="journal article" date="2003" name="Science">
        <title>Collection, mapping, and annotation of over 28,000 cDNA clones from japonica rice.</title>
        <authorList>
            <consortium name="The rice full-length cDNA consortium"/>
        </authorList>
    </citation>
    <scope>NUCLEOTIDE SEQUENCE [LARGE SCALE MRNA]</scope>
    <source>
        <strain>cv. Nipponbare</strain>
    </source>
</reference>
<reference key="8">
    <citation type="journal article" date="1989" name="Protein Seq. Data Anal.">
        <title>Amino acid sequences of ferredoxins from rice cultivars, japonica and indica.</title>
        <authorList>
            <person name="Kamo M."/>
            <person name="Kotani N."/>
            <person name="Tsugita A."/>
            <person name="He Y.-K."/>
            <person name="Nozu Y."/>
        </authorList>
    </citation>
    <scope>PROTEIN SEQUENCE OF 44-139</scope>
    <source>
        <tissue>Leaf</tissue>
    </source>
</reference>
<sequence>MAATALSSQVRLPMSLRVATAPAPARVSVLPASNKLGDRLRMQATYNVKLITPDGEVELQVPDDVYILDQAEEEGIDLPYSCRAGSCSSCAGKVVSGEIDQSDQSFLDDDQVAAGWVLTCHAYPKSDVVIETHKEDDLI</sequence>
<evidence type="ECO:0000255" key="1">
    <source>
        <dbReference type="PROSITE-ProRule" id="PRU00465"/>
    </source>
</evidence>
<evidence type="ECO:0000269" key="2">
    <source>
    </source>
</evidence>
<evidence type="ECO:0000305" key="3"/>
<protein>
    <recommendedName>
        <fullName>Ferredoxin-1, chloroplastic</fullName>
    </recommendedName>
    <alternativeName>
        <fullName>Anti-disease protein 1</fullName>
    </alternativeName>
    <alternativeName>
        <fullName>Ferredoxin I</fullName>
    </alternativeName>
</protein>
<accession>Q0J8M2</accession>
<accession>B7F4N2</accession>
<accession>O22382</accession>
<accession>P11051</accession>
<accession>Q40683</accession>
<accession>Q6ZJN6</accession>
<accession>Q8S9N2</accession>
<organism>
    <name type="scientific">Oryza sativa subsp. japonica</name>
    <name type="common">Rice</name>
    <dbReference type="NCBI Taxonomy" id="39947"/>
    <lineage>
        <taxon>Eukaryota</taxon>
        <taxon>Viridiplantae</taxon>
        <taxon>Streptophyta</taxon>
        <taxon>Embryophyta</taxon>
        <taxon>Tracheophyta</taxon>
        <taxon>Spermatophyta</taxon>
        <taxon>Magnoliopsida</taxon>
        <taxon>Liliopsida</taxon>
        <taxon>Poales</taxon>
        <taxon>Poaceae</taxon>
        <taxon>BOP clade</taxon>
        <taxon>Oryzoideae</taxon>
        <taxon>Oryzeae</taxon>
        <taxon>Oryzinae</taxon>
        <taxon>Oryza</taxon>
        <taxon>Oryza sativa</taxon>
    </lineage>
</organism>